<evidence type="ECO:0000255" key="1">
    <source>
        <dbReference type="HAMAP-Rule" id="MF_00160"/>
    </source>
</evidence>
<sequence>MTRAFNFSAGPATLPESVLRQAQAEMLDWHGSGASIVEMSHRGAEFMSVAAEAEADLRRLLDIPEDYAVLFLSGGATTQQALIPLNFAAPGQRADYVVSGHWGKTAVKQAGVYVDVNIAASSEANGYRELPARADWQLSPDAAYVHLTANETIHGVEFRDVPDTGNVPLIADFSSSIASEPLDVRRYGVIYAGAQKNLGPVGIAVMIIRLDLLERSGQPRADIFDYRSHVARDSMLNTPPTWNWYLAGLVFKWMLAEGGVAEFAKRNAAKAALVYGAIDGSGGFYRNEVAHAARSRMNIPFFLPDAELDARFVAEAKAAGLLALKGHKVVGGIRASLYNAMPLAGAEALVAFMADFQQRHG</sequence>
<comment type="function">
    <text evidence="1">Catalyzes the reversible conversion of 3-phosphohydroxypyruvate to phosphoserine and of 3-hydroxy-2-oxo-4-phosphonooxybutanoate to phosphohydroxythreonine.</text>
</comment>
<comment type="catalytic activity">
    <reaction evidence="1">
        <text>O-phospho-L-serine + 2-oxoglutarate = 3-phosphooxypyruvate + L-glutamate</text>
        <dbReference type="Rhea" id="RHEA:14329"/>
        <dbReference type="ChEBI" id="CHEBI:16810"/>
        <dbReference type="ChEBI" id="CHEBI:18110"/>
        <dbReference type="ChEBI" id="CHEBI:29985"/>
        <dbReference type="ChEBI" id="CHEBI:57524"/>
        <dbReference type="EC" id="2.6.1.52"/>
    </reaction>
</comment>
<comment type="catalytic activity">
    <reaction evidence="1">
        <text>4-(phosphooxy)-L-threonine + 2-oxoglutarate = (R)-3-hydroxy-2-oxo-4-phosphooxybutanoate + L-glutamate</text>
        <dbReference type="Rhea" id="RHEA:16573"/>
        <dbReference type="ChEBI" id="CHEBI:16810"/>
        <dbReference type="ChEBI" id="CHEBI:29985"/>
        <dbReference type="ChEBI" id="CHEBI:58452"/>
        <dbReference type="ChEBI" id="CHEBI:58538"/>
        <dbReference type="EC" id="2.6.1.52"/>
    </reaction>
</comment>
<comment type="cofactor">
    <cofactor evidence="1">
        <name>pyridoxal 5'-phosphate</name>
        <dbReference type="ChEBI" id="CHEBI:597326"/>
    </cofactor>
    <text evidence="1">Binds 1 pyridoxal phosphate per subunit.</text>
</comment>
<comment type="pathway">
    <text evidence="1">Amino-acid biosynthesis; L-serine biosynthesis; L-serine from 3-phospho-D-glycerate: step 2/3.</text>
</comment>
<comment type="pathway">
    <text evidence="1">Cofactor biosynthesis; pyridoxine 5'-phosphate biosynthesis; pyridoxine 5'-phosphate from D-erythrose 4-phosphate: step 3/5.</text>
</comment>
<comment type="subunit">
    <text evidence="1">Homodimer.</text>
</comment>
<comment type="subcellular location">
    <subcellularLocation>
        <location evidence="1">Cytoplasm</location>
    </subcellularLocation>
</comment>
<comment type="similarity">
    <text evidence="1">Belongs to the class-V pyridoxal-phosphate-dependent aminotransferase family. SerC subfamily.</text>
</comment>
<keyword id="KW-0028">Amino-acid biosynthesis</keyword>
<keyword id="KW-0032">Aminotransferase</keyword>
<keyword id="KW-0963">Cytoplasm</keyword>
<keyword id="KW-0663">Pyridoxal phosphate</keyword>
<keyword id="KW-0664">Pyridoxine biosynthesis</keyword>
<keyword id="KW-0718">Serine biosynthesis</keyword>
<keyword id="KW-0808">Transferase</keyword>
<accession>B4SP45</accession>
<name>SERC_STRM5</name>
<feature type="chain" id="PRO_1000097221" description="Phosphoserine aminotransferase">
    <location>
        <begin position="1"/>
        <end position="361"/>
    </location>
</feature>
<feature type="binding site" evidence="1">
    <location>
        <position position="42"/>
    </location>
    <ligand>
        <name>L-glutamate</name>
        <dbReference type="ChEBI" id="CHEBI:29985"/>
    </ligand>
</feature>
<feature type="binding site" evidence="1">
    <location>
        <begin position="76"/>
        <end position="77"/>
    </location>
    <ligand>
        <name>pyridoxal 5'-phosphate</name>
        <dbReference type="ChEBI" id="CHEBI:597326"/>
    </ligand>
</feature>
<feature type="binding site" evidence="1">
    <location>
        <position position="102"/>
    </location>
    <ligand>
        <name>pyridoxal 5'-phosphate</name>
        <dbReference type="ChEBI" id="CHEBI:597326"/>
    </ligand>
</feature>
<feature type="binding site" evidence="1">
    <location>
        <position position="152"/>
    </location>
    <ligand>
        <name>pyridoxal 5'-phosphate</name>
        <dbReference type="ChEBI" id="CHEBI:597326"/>
    </ligand>
</feature>
<feature type="binding site" evidence="1">
    <location>
        <position position="172"/>
    </location>
    <ligand>
        <name>pyridoxal 5'-phosphate</name>
        <dbReference type="ChEBI" id="CHEBI:597326"/>
    </ligand>
</feature>
<feature type="binding site" evidence="1">
    <location>
        <position position="195"/>
    </location>
    <ligand>
        <name>pyridoxal 5'-phosphate</name>
        <dbReference type="ChEBI" id="CHEBI:597326"/>
    </ligand>
</feature>
<feature type="binding site" evidence="1">
    <location>
        <begin position="237"/>
        <end position="238"/>
    </location>
    <ligand>
        <name>pyridoxal 5'-phosphate</name>
        <dbReference type="ChEBI" id="CHEBI:597326"/>
    </ligand>
</feature>
<feature type="modified residue" description="N6-(pyridoxal phosphate)lysine" evidence="1">
    <location>
        <position position="196"/>
    </location>
</feature>
<organism>
    <name type="scientific">Stenotrophomonas maltophilia (strain R551-3)</name>
    <dbReference type="NCBI Taxonomy" id="391008"/>
    <lineage>
        <taxon>Bacteria</taxon>
        <taxon>Pseudomonadati</taxon>
        <taxon>Pseudomonadota</taxon>
        <taxon>Gammaproteobacteria</taxon>
        <taxon>Lysobacterales</taxon>
        <taxon>Lysobacteraceae</taxon>
        <taxon>Stenotrophomonas</taxon>
        <taxon>Stenotrophomonas maltophilia group</taxon>
    </lineage>
</organism>
<reference key="1">
    <citation type="submission" date="2008-06" db="EMBL/GenBank/DDBJ databases">
        <title>Complete sequence of Stenotrophomonas maltophilia R551-3.</title>
        <authorList>
            <consortium name="US DOE Joint Genome Institute"/>
            <person name="Lucas S."/>
            <person name="Copeland A."/>
            <person name="Lapidus A."/>
            <person name="Glavina del Rio T."/>
            <person name="Dalin E."/>
            <person name="Tice H."/>
            <person name="Pitluck S."/>
            <person name="Chain P."/>
            <person name="Malfatti S."/>
            <person name="Shin M."/>
            <person name="Vergez L."/>
            <person name="Lang D."/>
            <person name="Schmutz J."/>
            <person name="Larimer F."/>
            <person name="Land M."/>
            <person name="Hauser L."/>
            <person name="Kyrpides N."/>
            <person name="Mikhailova N."/>
            <person name="Taghavi S."/>
            <person name="Monchy S."/>
            <person name="Newman L."/>
            <person name="Vangronsveld J."/>
            <person name="van der Lelie D."/>
            <person name="Richardson P."/>
        </authorList>
    </citation>
    <scope>NUCLEOTIDE SEQUENCE [LARGE SCALE GENOMIC DNA]</scope>
    <source>
        <strain>R551-3</strain>
    </source>
</reference>
<gene>
    <name evidence="1" type="primary">serC</name>
    <name type="ordered locus">Smal_2540</name>
</gene>
<proteinExistence type="inferred from homology"/>
<protein>
    <recommendedName>
        <fullName evidence="1">Phosphoserine aminotransferase</fullName>
        <ecNumber evidence="1">2.6.1.52</ecNumber>
    </recommendedName>
    <alternativeName>
        <fullName evidence="1">Phosphohydroxythreonine aminotransferase</fullName>
        <shortName evidence="1">PSAT</shortName>
    </alternativeName>
</protein>
<dbReference type="EC" id="2.6.1.52" evidence="1"/>
<dbReference type="EMBL" id="CP001111">
    <property type="protein sequence ID" value="ACF52240.1"/>
    <property type="molecule type" value="Genomic_DNA"/>
</dbReference>
<dbReference type="RefSeq" id="WP_012511516.1">
    <property type="nucleotide sequence ID" value="NC_011071.1"/>
</dbReference>
<dbReference type="SMR" id="B4SP45"/>
<dbReference type="STRING" id="391008.Smal_2540"/>
<dbReference type="KEGG" id="smt:Smal_2540"/>
<dbReference type="eggNOG" id="COG1932">
    <property type="taxonomic scope" value="Bacteria"/>
</dbReference>
<dbReference type="HOGENOM" id="CLU_034866_0_2_6"/>
<dbReference type="OrthoDB" id="9809412at2"/>
<dbReference type="UniPathway" id="UPA00135">
    <property type="reaction ID" value="UER00197"/>
</dbReference>
<dbReference type="UniPathway" id="UPA00244">
    <property type="reaction ID" value="UER00311"/>
</dbReference>
<dbReference type="Proteomes" id="UP000001867">
    <property type="component" value="Chromosome"/>
</dbReference>
<dbReference type="GO" id="GO:0005737">
    <property type="term" value="C:cytoplasm"/>
    <property type="evidence" value="ECO:0007669"/>
    <property type="project" value="UniProtKB-SubCell"/>
</dbReference>
<dbReference type="GO" id="GO:0004648">
    <property type="term" value="F:O-phospho-L-serine:2-oxoglutarate aminotransferase activity"/>
    <property type="evidence" value="ECO:0007669"/>
    <property type="project" value="UniProtKB-UniRule"/>
</dbReference>
<dbReference type="GO" id="GO:0030170">
    <property type="term" value="F:pyridoxal phosphate binding"/>
    <property type="evidence" value="ECO:0007669"/>
    <property type="project" value="UniProtKB-UniRule"/>
</dbReference>
<dbReference type="GO" id="GO:0006564">
    <property type="term" value="P:L-serine biosynthetic process"/>
    <property type="evidence" value="ECO:0007669"/>
    <property type="project" value="UniProtKB-UniRule"/>
</dbReference>
<dbReference type="GO" id="GO:0008615">
    <property type="term" value="P:pyridoxine biosynthetic process"/>
    <property type="evidence" value="ECO:0007669"/>
    <property type="project" value="UniProtKB-UniRule"/>
</dbReference>
<dbReference type="FunFam" id="3.40.640.10:FF:000010">
    <property type="entry name" value="Phosphoserine aminotransferase"/>
    <property type="match status" value="1"/>
</dbReference>
<dbReference type="FunFam" id="3.90.1150.10:FF:000006">
    <property type="entry name" value="Phosphoserine aminotransferase"/>
    <property type="match status" value="1"/>
</dbReference>
<dbReference type="Gene3D" id="3.90.1150.10">
    <property type="entry name" value="Aspartate Aminotransferase, domain 1"/>
    <property type="match status" value="1"/>
</dbReference>
<dbReference type="Gene3D" id="3.40.640.10">
    <property type="entry name" value="Type I PLP-dependent aspartate aminotransferase-like (Major domain)"/>
    <property type="match status" value="1"/>
</dbReference>
<dbReference type="HAMAP" id="MF_00160">
    <property type="entry name" value="SerC_aminotrans_5"/>
    <property type="match status" value="1"/>
</dbReference>
<dbReference type="InterPro" id="IPR000192">
    <property type="entry name" value="Aminotrans_V_dom"/>
</dbReference>
<dbReference type="InterPro" id="IPR020578">
    <property type="entry name" value="Aminotrans_V_PyrdxlP_BS"/>
</dbReference>
<dbReference type="InterPro" id="IPR022278">
    <property type="entry name" value="Pser_aminoTfrase"/>
</dbReference>
<dbReference type="InterPro" id="IPR015424">
    <property type="entry name" value="PyrdxlP-dep_Trfase"/>
</dbReference>
<dbReference type="InterPro" id="IPR015421">
    <property type="entry name" value="PyrdxlP-dep_Trfase_major"/>
</dbReference>
<dbReference type="InterPro" id="IPR015422">
    <property type="entry name" value="PyrdxlP-dep_Trfase_small"/>
</dbReference>
<dbReference type="NCBIfam" id="NF003764">
    <property type="entry name" value="PRK05355.1"/>
    <property type="match status" value="1"/>
</dbReference>
<dbReference type="NCBIfam" id="TIGR01364">
    <property type="entry name" value="serC_1"/>
    <property type="match status" value="1"/>
</dbReference>
<dbReference type="PANTHER" id="PTHR43247">
    <property type="entry name" value="PHOSPHOSERINE AMINOTRANSFERASE"/>
    <property type="match status" value="1"/>
</dbReference>
<dbReference type="PANTHER" id="PTHR43247:SF1">
    <property type="entry name" value="PHOSPHOSERINE AMINOTRANSFERASE"/>
    <property type="match status" value="1"/>
</dbReference>
<dbReference type="Pfam" id="PF00266">
    <property type="entry name" value="Aminotran_5"/>
    <property type="match status" value="1"/>
</dbReference>
<dbReference type="PIRSF" id="PIRSF000525">
    <property type="entry name" value="SerC"/>
    <property type="match status" value="1"/>
</dbReference>
<dbReference type="SUPFAM" id="SSF53383">
    <property type="entry name" value="PLP-dependent transferases"/>
    <property type="match status" value="1"/>
</dbReference>
<dbReference type="PROSITE" id="PS00595">
    <property type="entry name" value="AA_TRANSFER_CLASS_5"/>
    <property type="match status" value="1"/>
</dbReference>